<proteinExistence type="inferred from homology"/>
<organism>
    <name type="scientific">Francisella tularensis subsp. mediasiatica (strain FSC147)</name>
    <dbReference type="NCBI Taxonomy" id="441952"/>
    <lineage>
        <taxon>Bacteria</taxon>
        <taxon>Pseudomonadati</taxon>
        <taxon>Pseudomonadota</taxon>
        <taxon>Gammaproteobacteria</taxon>
        <taxon>Thiotrichales</taxon>
        <taxon>Francisellaceae</taxon>
        <taxon>Francisella</taxon>
    </lineage>
</organism>
<feature type="chain" id="PRO_1000129192" description="Succinate--CoA ligase [ADP-forming] subunit beta">
    <location>
        <begin position="1"/>
        <end position="387"/>
    </location>
</feature>
<feature type="domain" description="ATP-grasp" evidence="1">
    <location>
        <begin position="9"/>
        <end position="245"/>
    </location>
</feature>
<feature type="binding site" evidence="1">
    <location>
        <position position="46"/>
    </location>
    <ligand>
        <name>ATP</name>
        <dbReference type="ChEBI" id="CHEBI:30616"/>
    </ligand>
</feature>
<feature type="binding site" evidence="1">
    <location>
        <begin position="53"/>
        <end position="55"/>
    </location>
    <ligand>
        <name>ATP</name>
        <dbReference type="ChEBI" id="CHEBI:30616"/>
    </ligand>
</feature>
<feature type="binding site" evidence="1">
    <location>
        <position position="100"/>
    </location>
    <ligand>
        <name>ATP</name>
        <dbReference type="ChEBI" id="CHEBI:30616"/>
    </ligand>
</feature>
<feature type="binding site" evidence="1">
    <location>
        <position position="103"/>
    </location>
    <ligand>
        <name>ATP</name>
        <dbReference type="ChEBI" id="CHEBI:30616"/>
    </ligand>
</feature>
<feature type="binding site" evidence="1">
    <location>
        <position position="108"/>
    </location>
    <ligand>
        <name>ATP</name>
        <dbReference type="ChEBI" id="CHEBI:30616"/>
    </ligand>
</feature>
<feature type="binding site" evidence="1">
    <location>
        <position position="200"/>
    </location>
    <ligand>
        <name>Mg(2+)</name>
        <dbReference type="ChEBI" id="CHEBI:18420"/>
    </ligand>
</feature>
<feature type="binding site" evidence="1">
    <location>
        <position position="214"/>
    </location>
    <ligand>
        <name>Mg(2+)</name>
        <dbReference type="ChEBI" id="CHEBI:18420"/>
    </ligand>
</feature>
<feature type="binding site" evidence="1">
    <location>
        <position position="265"/>
    </location>
    <ligand>
        <name>substrate</name>
        <note>ligand shared with subunit alpha</note>
    </ligand>
</feature>
<feature type="binding site" evidence="1">
    <location>
        <begin position="322"/>
        <end position="324"/>
    </location>
    <ligand>
        <name>substrate</name>
        <note>ligand shared with subunit alpha</note>
    </ligand>
</feature>
<sequence length="387" mass="41556">MNLHEYQAKDLLESYGLKVQKGIVAHNPNEAARAFDQLGGKFAVVKAQVHAGGRGKAGGVKVVKSSQEAREVAESLIGKNLVTFQTDAEGQPVNSVGVFEDVYPVTRELYLGAVVDRSSRKVTFMASTEGGVDIEEVAHNSPEKILKVEVDPLVGLQPFQAREVAFKLGLEGKQINDFVKTMLGAYKAFIECDFALFEINPLAVRENGEIVCVDGKINLDSNALYRHPKLLALRDKSQENAKELKASEHELNYVALEGNIGCMVNGAGLAMATMDIIQLYGGKPANFLDVGGGATKERVIEAFKLILDDENVKAVLINIFGGIVRCDMIAEAIIEAVKEVNVTVPVVVRLEGNNAEKGAKILADSGLKLIPADGLADAADKVVKSLG</sequence>
<protein>
    <recommendedName>
        <fullName evidence="1">Succinate--CoA ligase [ADP-forming] subunit beta</fullName>
        <ecNumber evidence="1">6.2.1.5</ecNumber>
    </recommendedName>
    <alternativeName>
        <fullName evidence="1">Succinyl-CoA synthetase subunit beta</fullName>
        <shortName evidence="1">SCS-beta</shortName>
    </alternativeName>
</protein>
<keyword id="KW-0067">ATP-binding</keyword>
<keyword id="KW-0436">Ligase</keyword>
<keyword id="KW-0460">Magnesium</keyword>
<keyword id="KW-0479">Metal-binding</keyword>
<keyword id="KW-0547">Nucleotide-binding</keyword>
<keyword id="KW-0816">Tricarboxylic acid cycle</keyword>
<dbReference type="EC" id="6.2.1.5" evidence="1"/>
<dbReference type="EMBL" id="CP000915">
    <property type="protein sequence ID" value="ACD31235.1"/>
    <property type="molecule type" value="Genomic_DNA"/>
</dbReference>
<dbReference type="SMR" id="B2SDM1"/>
<dbReference type="KEGG" id="ftm:FTM_1400"/>
<dbReference type="HOGENOM" id="CLU_037430_0_2_6"/>
<dbReference type="UniPathway" id="UPA00223">
    <property type="reaction ID" value="UER00999"/>
</dbReference>
<dbReference type="GO" id="GO:0005829">
    <property type="term" value="C:cytosol"/>
    <property type="evidence" value="ECO:0007669"/>
    <property type="project" value="TreeGrafter"/>
</dbReference>
<dbReference type="GO" id="GO:0042709">
    <property type="term" value="C:succinate-CoA ligase complex"/>
    <property type="evidence" value="ECO:0007669"/>
    <property type="project" value="TreeGrafter"/>
</dbReference>
<dbReference type="GO" id="GO:0005524">
    <property type="term" value="F:ATP binding"/>
    <property type="evidence" value="ECO:0007669"/>
    <property type="project" value="UniProtKB-UniRule"/>
</dbReference>
<dbReference type="GO" id="GO:0000287">
    <property type="term" value="F:magnesium ion binding"/>
    <property type="evidence" value="ECO:0007669"/>
    <property type="project" value="UniProtKB-UniRule"/>
</dbReference>
<dbReference type="GO" id="GO:0004775">
    <property type="term" value="F:succinate-CoA ligase (ADP-forming) activity"/>
    <property type="evidence" value="ECO:0007669"/>
    <property type="project" value="UniProtKB-UniRule"/>
</dbReference>
<dbReference type="GO" id="GO:0004776">
    <property type="term" value="F:succinate-CoA ligase (GDP-forming) activity"/>
    <property type="evidence" value="ECO:0007669"/>
    <property type="project" value="RHEA"/>
</dbReference>
<dbReference type="GO" id="GO:0006104">
    <property type="term" value="P:succinyl-CoA metabolic process"/>
    <property type="evidence" value="ECO:0007669"/>
    <property type="project" value="TreeGrafter"/>
</dbReference>
<dbReference type="GO" id="GO:0006099">
    <property type="term" value="P:tricarboxylic acid cycle"/>
    <property type="evidence" value="ECO:0007669"/>
    <property type="project" value="UniProtKB-UniRule"/>
</dbReference>
<dbReference type="FunFam" id="3.30.1490.20:FF:000002">
    <property type="entry name" value="Succinate--CoA ligase [ADP-forming] subunit beta"/>
    <property type="match status" value="1"/>
</dbReference>
<dbReference type="FunFam" id="3.30.470.20:FF:000002">
    <property type="entry name" value="Succinate--CoA ligase [ADP-forming] subunit beta"/>
    <property type="match status" value="1"/>
</dbReference>
<dbReference type="FunFam" id="3.40.50.261:FF:000001">
    <property type="entry name" value="Succinate--CoA ligase [ADP-forming] subunit beta"/>
    <property type="match status" value="1"/>
</dbReference>
<dbReference type="Gene3D" id="3.30.1490.20">
    <property type="entry name" value="ATP-grasp fold, A domain"/>
    <property type="match status" value="1"/>
</dbReference>
<dbReference type="Gene3D" id="3.30.470.20">
    <property type="entry name" value="ATP-grasp fold, B domain"/>
    <property type="match status" value="1"/>
</dbReference>
<dbReference type="Gene3D" id="3.40.50.261">
    <property type="entry name" value="Succinyl-CoA synthetase domains"/>
    <property type="match status" value="1"/>
</dbReference>
<dbReference type="HAMAP" id="MF_00558">
    <property type="entry name" value="Succ_CoA_beta"/>
    <property type="match status" value="1"/>
</dbReference>
<dbReference type="InterPro" id="IPR011761">
    <property type="entry name" value="ATP-grasp"/>
</dbReference>
<dbReference type="InterPro" id="IPR013650">
    <property type="entry name" value="ATP-grasp_succ-CoA_synth-type"/>
</dbReference>
<dbReference type="InterPro" id="IPR013815">
    <property type="entry name" value="ATP_grasp_subdomain_1"/>
</dbReference>
<dbReference type="InterPro" id="IPR017866">
    <property type="entry name" value="Succ-CoA_synthase_bsu_CS"/>
</dbReference>
<dbReference type="InterPro" id="IPR005811">
    <property type="entry name" value="SUCC_ACL_C"/>
</dbReference>
<dbReference type="InterPro" id="IPR005809">
    <property type="entry name" value="Succ_CoA_ligase-like_bsu"/>
</dbReference>
<dbReference type="InterPro" id="IPR016102">
    <property type="entry name" value="Succinyl-CoA_synth-like"/>
</dbReference>
<dbReference type="NCBIfam" id="NF001913">
    <property type="entry name" value="PRK00696.1"/>
    <property type="match status" value="1"/>
</dbReference>
<dbReference type="NCBIfam" id="TIGR01016">
    <property type="entry name" value="sucCoAbeta"/>
    <property type="match status" value="1"/>
</dbReference>
<dbReference type="PANTHER" id="PTHR11815:SF10">
    <property type="entry name" value="SUCCINATE--COA LIGASE [GDP-FORMING] SUBUNIT BETA, MITOCHONDRIAL"/>
    <property type="match status" value="1"/>
</dbReference>
<dbReference type="PANTHER" id="PTHR11815">
    <property type="entry name" value="SUCCINYL-COA SYNTHETASE BETA CHAIN"/>
    <property type="match status" value="1"/>
</dbReference>
<dbReference type="Pfam" id="PF08442">
    <property type="entry name" value="ATP-grasp_2"/>
    <property type="match status" value="1"/>
</dbReference>
<dbReference type="Pfam" id="PF00549">
    <property type="entry name" value="Ligase_CoA"/>
    <property type="match status" value="1"/>
</dbReference>
<dbReference type="PIRSF" id="PIRSF001554">
    <property type="entry name" value="SucCS_beta"/>
    <property type="match status" value="1"/>
</dbReference>
<dbReference type="SUPFAM" id="SSF56059">
    <property type="entry name" value="Glutathione synthetase ATP-binding domain-like"/>
    <property type="match status" value="1"/>
</dbReference>
<dbReference type="SUPFAM" id="SSF52210">
    <property type="entry name" value="Succinyl-CoA synthetase domains"/>
    <property type="match status" value="1"/>
</dbReference>
<dbReference type="PROSITE" id="PS50975">
    <property type="entry name" value="ATP_GRASP"/>
    <property type="match status" value="1"/>
</dbReference>
<dbReference type="PROSITE" id="PS01217">
    <property type="entry name" value="SUCCINYL_COA_LIG_3"/>
    <property type="match status" value="1"/>
</dbReference>
<name>SUCC_FRATM</name>
<accession>B2SDM1</accession>
<gene>
    <name evidence="1" type="primary">sucC</name>
    <name type="ordered locus">FTM_1400</name>
</gene>
<reference key="1">
    <citation type="journal article" date="2009" name="PLoS Pathog.">
        <title>Molecular evolutionary consequences of niche restriction in Francisella tularensis, a facultative intracellular pathogen.</title>
        <authorList>
            <person name="Larsson P."/>
            <person name="Elfsmark D."/>
            <person name="Svensson K."/>
            <person name="Wikstroem P."/>
            <person name="Forsman M."/>
            <person name="Brettin T."/>
            <person name="Keim P."/>
            <person name="Johansson A."/>
        </authorList>
    </citation>
    <scope>NUCLEOTIDE SEQUENCE [LARGE SCALE GENOMIC DNA]</scope>
    <source>
        <strain>FSC147</strain>
    </source>
</reference>
<comment type="function">
    <text evidence="1">Succinyl-CoA synthetase functions in the citric acid cycle (TCA), coupling the hydrolysis of succinyl-CoA to the synthesis of either ATP or GTP and thus represents the only step of substrate-level phosphorylation in the TCA. The beta subunit provides nucleotide specificity of the enzyme and binds the substrate succinate, while the binding sites for coenzyme A and phosphate are found in the alpha subunit.</text>
</comment>
<comment type="catalytic activity">
    <reaction evidence="1">
        <text>succinate + ATP + CoA = succinyl-CoA + ADP + phosphate</text>
        <dbReference type="Rhea" id="RHEA:17661"/>
        <dbReference type="ChEBI" id="CHEBI:30031"/>
        <dbReference type="ChEBI" id="CHEBI:30616"/>
        <dbReference type="ChEBI" id="CHEBI:43474"/>
        <dbReference type="ChEBI" id="CHEBI:57287"/>
        <dbReference type="ChEBI" id="CHEBI:57292"/>
        <dbReference type="ChEBI" id="CHEBI:456216"/>
        <dbReference type="EC" id="6.2.1.5"/>
    </reaction>
    <physiologicalReaction direction="right-to-left" evidence="1">
        <dbReference type="Rhea" id="RHEA:17663"/>
    </physiologicalReaction>
</comment>
<comment type="catalytic activity">
    <reaction evidence="1">
        <text>GTP + succinate + CoA = succinyl-CoA + GDP + phosphate</text>
        <dbReference type="Rhea" id="RHEA:22120"/>
        <dbReference type="ChEBI" id="CHEBI:30031"/>
        <dbReference type="ChEBI" id="CHEBI:37565"/>
        <dbReference type="ChEBI" id="CHEBI:43474"/>
        <dbReference type="ChEBI" id="CHEBI:57287"/>
        <dbReference type="ChEBI" id="CHEBI:57292"/>
        <dbReference type="ChEBI" id="CHEBI:58189"/>
    </reaction>
    <physiologicalReaction direction="right-to-left" evidence="1">
        <dbReference type="Rhea" id="RHEA:22122"/>
    </physiologicalReaction>
</comment>
<comment type="cofactor">
    <cofactor evidence="1">
        <name>Mg(2+)</name>
        <dbReference type="ChEBI" id="CHEBI:18420"/>
    </cofactor>
    <text evidence="1">Binds 1 Mg(2+) ion per subunit.</text>
</comment>
<comment type="pathway">
    <text evidence="1">Carbohydrate metabolism; tricarboxylic acid cycle; succinate from succinyl-CoA (ligase route): step 1/1.</text>
</comment>
<comment type="subunit">
    <text evidence="1">Heterotetramer of two alpha and two beta subunits.</text>
</comment>
<comment type="similarity">
    <text evidence="1">Belongs to the succinate/malate CoA ligase beta subunit family.</text>
</comment>
<evidence type="ECO:0000255" key="1">
    <source>
        <dbReference type="HAMAP-Rule" id="MF_00558"/>
    </source>
</evidence>